<gene>
    <name evidence="1" type="primary">murC</name>
    <name type="ordered locus">BCAH820_4805</name>
</gene>
<reference key="1">
    <citation type="submission" date="2008-10" db="EMBL/GenBank/DDBJ databases">
        <title>Genome sequence of Bacillus cereus AH820.</title>
        <authorList>
            <person name="Dodson R.J."/>
            <person name="Durkin A.S."/>
            <person name="Rosovitz M.J."/>
            <person name="Rasko D.A."/>
            <person name="Hoffmaster A."/>
            <person name="Ravel J."/>
            <person name="Sutton G."/>
        </authorList>
    </citation>
    <scope>NUCLEOTIDE SEQUENCE [LARGE SCALE GENOMIC DNA]</scope>
    <source>
        <strain>AH820</strain>
    </source>
</reference>
<name>MURC_BACC0</name>
<sequence length="436" mass="49257">MTVYHFVGIKGTGMSSLAQILHDMKHTVQGSDYEKRFFTQTALEKRNISILPFDKSNVKEGQVIIAGNAFPDTHEEIVAAKELNIPVHRYHHFLGDLMNQYTSVAVTGAHGKTSTTGLLAHVMQGAHPTSYLIGDGTGHGVENSKYFVFEACEYRRHFLSYNPDYAIMTNIDFDHPDYFTDINDVFSAFQEMALQVKKGIIACGDDEELQKIQAKVPVIFYGFGEDNDFQARNIQKRTDGTIFDVFVRNTYYDTFKITGYGNHSVLNALAVIALCHYENVDVEAVKHQLTTFEGVKRRFNEKPMGEQVIIDDYAHHPTEINATIEAARQKHPEREIVAVFQPHTFSRTEKFLDEFAESLSKADQVYLCDIFGSARENKGELTIEDLQKRIDGAELITDTTTDVLKKHKNGVLIFMGAGDIQKFEAAYVKEVQVAEK</sequence>
<accession>B7JS63</accession>
<feature type="chain" id="PRO_1000116615" description="UDP-N-acetylmuramate--L-alanine ligase">
    <location>
        <begin position="1"/>
        <end position="436"/>
    </location>
</feature>
<feature type="binding site" evidence="1">
    <location>
        <begin position="108"/>
        <end position="114"/>
    </location>
    <ligand>
        <name>ATP</name>
        <dbReference type="ChEBI" id="CHEBI:30616"/>
    </ligand>
</feature>
<dbReference type="EC" id="6.3.2.8" evidence="1"/>
<dbReference type="EMBL" id="CP001283">
    <property type="protein sequence ID" value="ACK91536.1"/>
    <property type="molecule type" value="Genomic_DNA"/>
</dbReference>
<dbReference type="RefSeq" id="WP_000219465.1">
    <property type="nucleotide sequence ID" value="NC_011773.1"/>
</dbReference>
<dbReference type="SMR" id="B7JS63"/>
<dbReference type="GeneID" id="45024558"/>
<dbReference type="KEGG" id="bcu:BCAH820_4805"/>
<dbReference type="HOGENOM" id="CLU_028104_1_0_9"/>
<dbReference type="UniPathway" id="UPA00219"/>
<dbReference type="Proteomes" id="UP000001363">
    <property type="component" value="Chromosome"/>
</dbReference>
<dbReference type="GO" id="GO:0005737">
    <property type="term" value="C:cytoplasm"/>
    <property type="evidence" value="ECO:0007669"/>
    <property type="project" value="UniProtKB-SubCell"/>
</dbReference>
<dbReference type="GO" id="GO:0005524">
    <property type="term" value="F:ATP binding"/>
    <property type="evidence" value="ECO:0007669"/>
    <property type="project" value="UniProtKB-UniRule"/>
</dbReference>
<dbReference type="GO" id="GO:0008763">
    <property type="term" value="F:UDP-N-acetylmuramate-L-alanine ligase activity"/>
    <property type="evidence" value="ECO:0007669"/>
    <property type="project" value="UniProtKB-UniRule"/>
</dbReference>
<dbReference type="GO" id="GO:0051301">
    <property type="term" value="P:cell division"/>
    <property type="evidence" value="ECO:0007669"/>
    <property type="project" value="UniProtKB-KW"/>
</dbReference>
<dbReference type="GO" id="GO:0071555">
    <property type="term" value="P:cell wall organization"/>
    <property type="evidence" value="ECO:0007669"/>
    <property type="project" value="UniProtKB-KW"/>
</dbReference>
<dbReference type="GO" id="GO:0009252">
    <property type="term" value="P:peptidoglycan biosynthetic process"/>
    <property type="evidence" value="ECO:0007669"/>
    <property type="project" value="UniProtKB-UniRule"/>
</dbReference>
<dbReference type="GO" id="GO:0008360">
    <property type="term" value="P:regulation of cell shape"/>
    <property type="evidence" value="ECO:0007669"/>
    <property type="project" value="UniProtKB-KW"/>
</dbReference>
<dbReference type="Gene3D" id="3.90.190.20">
    <property type="entry name" value="Mur ligase, C-terminal domain"/>
    <property type="match status" value="1"/>
</dbReference>
<dbReference type="Gene3D" id="3.40.1190.10">
    <property type="entry name" value="Mur-like, catalytic domain"/>
    <property type="match status" value="1"/>
</dbReference>
<dbReference type="Gene3D" id="3.40.50.720">
    <property type="entry name" value="NAD(P)-binding Rossmann-like Domain"/>
    <property type="match status" value="1"/>
</dbReference>
<dbReference type="HAMAP" id="MF_00046">
    <property type="entry name" value="MurC"/>
    <property type="match status" value="1"/>
</dbReference>
<dbReference type="InterPro" id="IPR036565">
    <property type="entry name" value="Mur-like_cat_sf"/>
</dbReference>
<dbReference type="InterPro" id="IPR004101">
    <property type="entry name" value="Mur_ligase_C"/>
</dbReference>
<dbReference type="InterPro" id="IPR036615">
    <property type="entry name" value="Mur_ligase_C_dom_sf"/>
</dbReference>
<dbReference type="InterPro" id="IPR013221">
    <property type="entry name" value="Mur_ligase_cen"/>
</dbReference>
<dbReference type="InterPro" id="IPR000713">
    <property type="entry name" value="Mur_ligase_N"/>
</dbReference>
<dbReference type="InterPro" id="IPR050061">
    <property type="entry name" value="MurCDEF_pg_biosynth"/>
</dbReference>
<dbReference type="InterPro" id="IPR005758">
    <property type="entry name" value="UDP-N-AcMur_Ala_ligase_MurC"/>
</dbReference>
<dbReference type="NCBIfam" id="TIGR01082">
    <property type="entry name" value="murC"/>
    <property type="match status" value="1"/>
</dbReference>
<dbReference type="PANTHER" id="PTHR43445:SF3">
    <property type="entry name" value="UDP-N-ACETYLMURAMATE--L-ALANINE LIGASE"/>
    <property type="match status" value="1"/>
</dbReference>
<dbReference type="PANTHER" id="PTHR43445">
    <property type="entry name" value="UDP-N-ACETYLMURAMATE--L-ALANINE LIGASE-RELATED"/>
    <property type="match status" value="1"/>
</dbReference>
<dbReference type="Pfam" id="PF01225">
    <property type="entry name" value="Mur_ligase"/>
    <property type="match status" value="1"/>
</dbReference>
<dbReference type="Pfam" id="PF02875">
    <property type="entry name" value="Mur_ligase_C"/>
    <property type="match status" value="1"/>
</dbReference>
<dbReference type="Pfam" id="PF08245">
    <property type="entry name" value="Mur_ligase_M"/>
    <property type="match status" value="1"/>
</dbReference>
<dbReference type="SUPFAM" id="SSF51984">
    <property type="entry name" value="MurCD N-terminal domain"/>
    <property type="match status" value="1"/>
</dbReference>
<dbReference type="SUPFAM" id="SSF53623">
    <property type="entry name" value="MurD-like peptide ligases, catalytic domain"/>
    <property type="match status" value="1"/>
</dbReference>
<dbReference type="SUPFAM" id="SSF53244">
    <property type="entry name" value="MurD-like peptide ligases, peptide-binding domain"/>
    <property type="match status" value="1"/>
</dbReference>
<proteinExistence type="inferred from homology"/>
<evidence type="ECO:0000255" key="1">
    <source>
        <dbReference type="HAMAP-Rule" id="MF_00046"/>
    </source>
</evidence>
<comment type="function">
    <text evidence="1">Cell wall formation.</text>
</comment>
<comment type="catalytic activity">
    <reaction evidence="1">
        <text>UDP-N-acetyl-alpha-D-muramate + L-alanine + ATP = UDP-N-acetyl-alpha-D-muramoyl-L-alanine + ADP + phosphate + H(+)</text>
        <dbReference type="Rhea" id="RHEA:23372"/>
        <dbReference type="ChEBI" id="CHEBI:15378"/>
        <dbReference type="ChEBI" id="CHEBI:30616"/>
        <dbReference type="ChEBI" id="CHEBI:43474"/>
        <dbReference type="ChEBI" id="CHEBI:57972"/>
        <dbReference type="ChEBI" id="CHEBI:70757"/>
        <dbReference type="ChEBI" id="CHEBI:83898"/>
        <dbReference type="ChEBI" id="CHEBI:456216"/>
        <dbReference type="EC" id="6.3.2.8"/>
    </reaction>
</comment>
<comment type="pathway">
    <text evidence="1">Cell wall biogenesis; peptidoglycan biosynthesis.</text>
</comment>
<comment type="subcellular location">
    <subcellularLocation>
        <location evidence="1">Cytoplasm</location>
    </subcellularLocation>
</comment>
<comment type="similarity">
    <text evidence="1">Belongs to the MurCDEF family.</text>
</comment>
<protein>
    <recommendedName>
        <fullName evidence="1">UDP-N-acetylmuramate--L-alanine ligase</fullName>
        <ecNumber evidence="1">6.3.2.8</ecNumber>
    </recommendedName>
    <alternativeName>
        <fullName evidence="1">UDP-N-acetylmuramoyl-L-alanine synthetase</fullName>
    </alternativeName>
</protein>
<organism>
    <name type="scientific">Bacillus cereus (strain AH820)</name>
    <dbReference type="NCBI Taxonomy" id="405535"/>
    <lineage>
        <taxon>Bacteria</taxon>
        <taxon>Bacillati</taxon>
        <taxon>Bacillota</taxon>
        <taxon>Bacilli</taxon>
        <taxon>Bacillales</taxon>
        <taxon>Bacillaceae</taxon>
        <taxon>Bacillus</taxon>
        <taxon>Bacillus cereus group</taxon>
    </lineage>
</organism>
<keyword id="KW-0067">ATP-binding</keyword>
<keyword id="KW-0131">Cell cycle</keyword>
<keyword id="KW-0132">Cell division</keyword>
<keyword id="KW-0133">Cell shape</keyword>
<keyword id="KW-0961">Cell wall biogenesis/degradation</keyword>
<keyword id="KW-0963">Cytoplasm</keyword>
<keyword id="KW-0436">Ligase</keyword>
<keyword id="KW-0547">Nucleotide-binding</keyword>
<keyword id="KW-0573">Peptidoglycan synthesis</keyword>